<gene>
    <name evidence="2" type="primary">PDHB</name>
</gene>
<keyword id="KW-0119">Carbohydrate metabolism</keyword>
<keyword id="KW-0313">Glucose metabolism</keyword>
<keyword id="KW-0479">Metal-binding</keyword>
<keyword id="KW-0496">Mitochondrion</keyword>
<keyword id="KW-0560">Oxidoreductase</keyword>
<keyword id="KW-0597">Phosphoprotein</keyword>
<keyword id="KW-0630">Potassium</keyword>
<keyword id="KW-0670">Pyruvate</keyword>
<keyword id="KW-1185">Reference proteome</keyword>
<keyword id="KW-0786">Thiamine pyrophosphate</keyword>
<keyword id="KW-0816">Tricarboxylic acid cycle</keyword>
<dbReference type="EC" id="1.2.4.1"/>
<dbReference type="SMR" id="P86222"/>
<dbReference type="Proteomes" id="UP000189706">
    <property type="component" value="Unplaced"/>
</dbReference>
<dbReference type="GO" id="GO:0005759">
    <property type="term" value="C:mitochondrial matrix"/>
    <property type="evidence" value="ECO:0007669"/>
    <property type="project" value="UniProtKB-SubCell"/>
</dbReference>
<dbReference type="GO" id="GO:0045254">
    <property type="term" value="C:pyruvate dehydrogenase complex"/>
    <property type="evidence" value="ECO:0000250"/>
    <property type="project" value="UniProtKB"/>
</dbReference>
<dbReference type="GO" id="GO:0046872">
    <property type="term" value="F:metal ion binding"/>
    <property type="evidence" value="ECO:0007669"/>
    <property type="project" value="UniProtKB-KW"/>
</dbReference>
<dbReference type="GO" id="GO:0004739">
    <property type="term" value="F:pyruvate dehydrogenase (acetyl-transferring) activity"/>
    <property type="evidence" value="ECO:0007669"/>
    <property type="project" value="UniProtKB-EC"/>
</dbReference>
<dbReference type="GO" id="GO:0006006">
    <property type="term" value="P:glucose metabolic process"/>
    <property type="evidence" value="ECO:0007669"/>
    <property type="project" value="UniProtKB-KW"/>
</dbReference>
<dbReference type="GO" id="GO:0006086">
    <property type="term" value="P:pyruvate decarboxylation to acetyl-CoA"/>
    <property type="evidence" value="ECO:0000250"/>
    <property type="project" value="UniProtKB"/>
</dbReference>
<dbReference type="GO" id="GO:0006099">
    <property type="term" value="P:tricarboxylic acid cycle"/>
    <property type="evidence" value="ECO:0007669"/>
    <property type="project" value="UniProtKB-KW"/>
</dbReference>
<dbReference type="Gene3D" id="3.40.50.920">
    <property type="match status" value="1"/>
</dbReference>
<dbReference type="Gene3D" id="3.40.50.970">
    <property type="match status" value="2"/>
</dbReference>
<dbReference type="InterPro" id="IPR027110">
    <property type="entry name" value="PDHB_mito-type"/>
</dbReference>
<dbReference type="InterPro" id="IPR029061">
    <property type="entry name" value="THDP-binding"/>
</dbReference>
<dbReference type="InterPro" id="IPR009014">
    <property type="entry name" value="Transketo_C/PFOR_II"/>
</dbReference>
<dbReference type="InterPro" id="IPR005475">
    <property type="entry name" value="Transketolase-like_Pyr-bd"/>
</dbReference>
<dbReference type="InterPro" id="IPR033248">
    <property type="entry name" value="Transketolase_C"/>
</dbReference>
<dbReference type="PANTHER" id="PTHR11624">
    <property type="entry name" value="DEHYDROGENASE RELATED"/>
    <property type="match status" value="1"/>
</dbReference>
<dbReference type="PANTHER" id="PTHR11624:SF96">
    <property type="entry name" value="PYRUVATE DEHYDROGENASE E1 COMPONENT SUBUNIT BETA, MITOCHONDRIAL"/>
    <property type="match status" value="1"/>
</dbReference>
<dbReference type="Pfam" id="PF02779">
    <property type="entry name" value="Transket_pyr"/>
    <property type="match status" value="1"/>
</dbReference>
<dbReference type="Pfam" id="PF02780">
    <property type="entry name" value="Transketolase_C"/>
    <property type="match status" value="1"/>
</dbReference>
<dbReference type="SMART" id="SM00861">
    <property type="entry name" value="Transket_pyr"/>
    <property type="match status" value="1"/>
</dbReference>
<dbReference type="SUPFAM" id="SSF52518">
    <property type="entry name" value="Thiamin diphosphate-binding fold (THDP-binding)"/>
    <property type="match status" value="1"/>
</dbReference>
<dbReference type="SUPFAM" id="SSF52922">
    <property type="entry name" value="TK C-terminal domain-like"/>
    <property type="match status" value="1"/>
</dbReference>
<organism>
    <name type="scientific">Mesocricetus auratus</name>
    <name type="common">Golden hamster</name>
    <dbReference type="NCBI Taxonomy" id="10036"/>
    <lineage>
        <taxon>Eukaryota</taxon>
        <taxon>Metazoa</taxon>
        <taxon>Chordata</taxon>
        <taxon>Craniata</taxon>
        <taxon>Vertebrata</taxon>
        <taxon>Euteleostomi</taxon>
        <taxon>Mammalia</taxon>
        <taxon>Eutheria</taxon>
        <taxon>Euarchontoglires</taxon>
        <taxon>Glires</taxon>
        <taxon>Rodentia</taxon>
        <taxon>Myomorpha</taxon>
        <taxon>Muroidea</taxon>
        <taxon>Cricetidae</taxon>
        <taxon>Cricetinae</taxon>
        <taxon>Mesocricetus</taxon>
    </lineage>
</organism>
<sequence length="211" mass="23010">EAINQGMDEELERDEKVFLLGEEVAQYDGAYKVSRTYYMSAGLQPVPIVFRGPNGASAGVAAQHSQCFAAWYGHCPGLKVVSPWNSEDAKGLIKSAIRDDNPVVMLENELMYGVAFELPTEAQSKDFLIPIGKEGIECEVINLRTIRPMDIEAIEASVMKTNHLVTVEGGWPQFGVGAEICARIMEGPAFNFLDAPAVRVTGADVPMPYAK</sequence>
<evidence type="ECO:0000250" key="1"/>
<evidence type="ECO:0000250" key="2">
    <source>
        <dbReference type="UniProtKB" id="P11177"/>
    </source>
</evidence>
<evidence type="ECO:0000250" key="3">
    <source>
        <dbReference type="UniProtKB" id="Q9D051"/>
    </source>
</evidence>
<evidence type="ECO:0000305" key="4"/>
<name>ODPB_MESAU</name>
<feature type="chain" id="PRO_0000394306" description="Pyruvate dehydrogenase E1 component subunit beta, mitochondrial">
    <location>
        <begin position="1" status="less than"/>
        <end position="211" status="greater than"/>
    </location>
</feature>
<feature type="binding site" evidence="2">
    <location>
        <position position="48"/>
    </location>
    <ligand>
        <name>K(+)</name>
        <dbReference type="ChEBI" id="CHEBI:29103"/>
        <note>structural</note>
    </ligand>
</feature>
<feature type="binding site" evidence="2">
    <location>
        <position position="96"/>
    </location>
    <ligand>
        <name>K(+)</name>
        <dbReference type="ChEBI" id="CHEBI:29103"/>
        <note>structural</note>
    </ligand>
</feature>
<feature type="binding site" evidence="2">
    <location>
        <position position="97"/>
    </location>
    <ligand>
        <name>K(+)</name>
        <dbReference type="ChEBI" id="CHEBI:29103"/>
        <note>structural</note>
    </ligand>
</feature>
<feature type="binding site" evidence="2">
    <location>
        <position position="99"/>
    </location>
    <ligand>
        <name>K(+)</name>
        <dbReference type="ChEBI" id="CHEBI:29103"/>
        <note>structural</note>
    </ligand>
</feature>
<feature type="binding site" evidence="2">
    <location>
        <position position="101"/>
    </location>
    <ligand>
        <name>K(+)</name>
        <dbReference type="ChEBI" id="CHEBI:29103"/>
        <note>structural</note>
    </ligand>
</feature>
<feature type="site" description="Important for interaction with DLAT" evidence="2">
    <location>
        <position position="194"/>
    </location>
</feature>
<feature type="modified residue" description="Phosphotyrosine" evidence="3">
    <location>
        <position position="31"/>
    </location>
</feature>
<feature type="non-consecutive residues" evidence="4">
    <location>
        <begin position="35"/>
        <end position="36"/>
    </location>
</feature>
<feature type="non-consecutive residues" evidence="4">
    <location>
        <begin position="133"/>
        <end position="134"/>
    </location>
</feature>
<feature type="non-terminal residue">
    <location>
        <position position="1"/>
    </location>
</feature>
<feature type="non-terminal residue">
    <location>
        <position position="211"/>
    </location>
</feature>
<proteinExistence type="evidence at protein level"/>
<protein>
    <recommendedName>
        <fullName evidence="2">Pyruvate dehydrogenase E1 component subunit beta, mitochondrial</fullName>
        <shortName evidence="2">PDHE1-B</shortName>
        <ecNumber>1.2.4.1</ecNumber>
    </recommendedName>
</protein>
<reference key="1">
    <citation type="journal article" date="2010" name="Asian J. Androl.">
        <title>Glucose-regulated protein precursor (GRP78) and tumor rejection antigen (GP96) are unique to hamster caput epididymal spermatozoa.</title>
        <authorList>
            <person name="Kameshwari D.B."/>
            <person name="Bhande S."/>
            <person name="Sundaram C.S."/>
            <person name="Kota V."/>
            <person name="Siva A.B."/>
            <person name="Shivaji S."/>
        </authorList>
    </citation>
    <scope>IDENTIFICATION BY MASS SPECTROMETRY</scope>
</reference>
<accession>P86222</accession>
<comment type="function">
    <text evidence="1">The pyruvate dehydrogenase complex catalyzes the overall conversion of pyruvate to acetyl-CoA and CO(2), and thereby links the glycolytic pathway to the tricarboxylic cycle.</text>
</comment>
<comment type="catalytic activity">
    <reaction evidence="2">
        <text>N(6)-[(R)-lipoyl]-L-lysyl-[protein] + pyruvate + H(+) = N(6)-[(R)-S(8)-acetyldihydrolipoyl]-L-lysyl-[protein] + CO2</text>
        <dbReference type="Rhea" id="RHEA:19189"/>
        <dbReference type="Rhea" id="RHEA-COMP:10474"/>
        <dbReference type="Rhea" id="RHEA-COMP:10478"/>
        <dbReference type="ChEBI" id="CHEBI:15361"/>
        <dbReference type="ChEBI" id="CHEBI:15378"/>
        <dbReference type="ChEBI" id="CHEBI:16526"/>
        <dbReference type="ChEBI" id="CHEBI:83099"/>
        <dbReference type="ChEBI" id="CHEBI:83111"/>
        <dbReference type="EC" id="1.2.4.1"/>
    </reaction>
</comment>
<comment type="cofactor">
    <cofactor evidence="2">
        <name>thiamine diphosphate</name>
        <dbReference type="ChEBI" id="CHEBI:58937"/>
    </cofactor>
</comment>
<comment type="subunit">
    <text evidence="2">Heterotetramer of two PDHA1 and two PDHB subunits. The heterotetramer interacts with DLAT, and is part of the multimeric pyruvate dehydrogenase complex that contains multiple copies of pyruvate dehydrogenase (E1), dihydrolipoamide acetyltransferase (DLAT, E2) and lipoamide dehydrogenase (DLD, E3). These subunits are bound to an inner core composed of about 48 DLAT and 12 PDHX molecules. Interacts with DLAT.</text>
</comment>
<comment type="subcellular location">
    <subcellularLocation>
        <location evidence="2">Mitochondrion matrix</location>
    </subcellularLocation>
</comment>